<gene>
    <name evidence="1" type="primary">recA</name>
    <name type="ordered locus">mlr0030</name>
</gene>
<sequence>MAQNSLRLVEDKAVDKSKALDAALSQIERAFGKGSIMRLGANEQVVEIETVPTGSLGLDIALGVGGLPRGRIIEIYGPESSGKTTLALHTVAEAQKKGGICAFVDAEHALDPVYARKLGVDLENLLISQPDTGEQALEICDTLVRSGAIDVLVVDSVAALTPRAEIEGEMGDSLPGLQARLMSQALRKLTASISRSNTMVIFINQIRMKIGVMFGSPETTTGGNALKFYASVRLDIRRIGSVKDRDEVVGNQTRVKVVKNKLAPPFKVVEFDIMYGEGVSKTGELVDLGVKAGVVEKSGAWFSYNSQRLGQGRENAKLFLRDNPDTAREIELALRQNAGLIAEKFLENGGSEGGDDGFEDEAGAM</sequence>
<comment type="function">
    <text evidence="1">Can catalyze the hydrolysis of ATP in the presence of single-stranded DNA, the ATP-dependent uptake of single-stranded DNA by duplex DNA, and the ATP-dependent hybridization of homologous single-stranded DNAs. It interacts with LexA causing its activation and leading to its autocatalytic cleavage.</text>
</comment>
<comment type="subcellular location">
    <subcellularLocation>
        <location evidence="1">Cytoplasm</location>
    </subcellularLocation>
</comment>
<comment type="similarity">
    <text evidence="1">Belongs to the RecA family.</text>
</comment>
<organism>
    <name type="scientific">Mesorhizobium japonicum (strain LMG 29417 / CECT 9101 / MAFF 303099)</name>
    <name type="common">Mesorhizobium loti (strain MAFF 303099)</name>
    <dbReference type="NCBI Taxonomy" id="266835"/>
    <lineage>
        <taxon>Bacteria</taxon>
        <taxon>Pseudomonadati</taxon>
        <taxon>Pseudomonadota</taxon>
        <taxon>Alphaproteobacteria</taxon>
        <taxon>Hyphomicrobiales</taxon>
        <taxon>Phyllobacteriaceae</taxon>
        <taxon>Mesorhizobium</taxon>
    </lineage>
</organism>
<feature type="chain" id="PRO_0000122813" description="Protein RecA">
    <location>
        <begin position="1"/>
        <end position="365"/>
    </location>
</feature>
<feature type="binding site" evidence="1">
    <location>
        <begin position="77"/>
        <end position="84"/>
    </location>
    <ligand>
        <name>ATP</name>
        <dbReference type="ChEBI" id="CHEBI:30616"/>
    </ligand>
</feature>
<proteinExistence type="inferred from homology"/>
<keyword id="KW-0067">ATP-binding</keyword>
<keyword id="KW-0963">Cytoplasm</keyword>
<keyword id="KW-0227">DNA damage</keyword>
<keyword id="KW-0233">DNA recombination</keyword>
<keyword id="KW-0234">DNA repair</keyword>
<keyword id="KW-0238">DNA-binding</keyword>
<keyword id="KW-0547">Nucleotide-binding</keyword>
<keyword id="KW-0742">SOS response</keyword>
<name>RECA_RHILO</name>
<accession>Q98NQ6</accession>
<evidence type="ECO:0000255" key="1">
    <source>
        <dbReference type="HAMAP-Rule" id="MF_00268"/>
    </source>
</evidence>
<dbReference type="EMBL" id="BA000012">
    <property type="protein sequence ID" value="BAB47705.1"/>
    <property type="molecule type" value="Genomic_DNA"/>
</dbReference>
<dbReference type="RefSeq" id="WP_010909075.1">
    <property type="nucleotide sequence ID" value="NC_002678.2"/>
</dbReference>
<dbReference type="SMR" id="Q98NQ6"/>
<dbReference type="GeneID" id="66684419"/>
<dbReference type="KEGG" id="mlo:mlr0030"/>
<dbReference type="eggNOG" id="COG0468">
    <property type="taxonomic scope" value="Bacteria"/>
</dbReference>
<dbReference type="HOGENOM" id="CLU_040469_3_2_5"/>
<dbReference type="Proteomes" id="UP000000552">
    <property type="component" value="Chromosome"/>
</dbReference>
<dbReference type="GO" id="GO:0005829">
    <property type="term" value="C:cytosol"/>
    <property type="evidence" value="ECO:0007669"/>
    <property type="project" value="TreeGrafter"/>
</dbReference>
<dbReference type="GO" id="GO:0005524">
    <property type="term" value="F:ATP binding"/>
    <property type="evidence" value="ECO:0007669"/>
    <property type="project" value="UniProtKB-UniRule"/>
</dbReference>
<dbReference type="GO" id="GO:0016887">
    <property type="term" value="F:ATP hydrolysis activity"/>
    <property type="evidence" value="ECO:0007669"/>
    <property type="project" value="InterPro"/>
</dbReference>
<dbReference type="GO" id="GO:0140664">
    <property type="term" value="F:ATP-dependent DNA damage sensor activity"/>
    <property type="evidence" value="ECO:0007669"/>
    <property type="project" value="InterPro"/>
</dbReference>
<dbReference type="GO" id="GO:0003684">
    <property type="term" value="F:damaged DNA binding"/>
    <property type="evidence" value="ECO:0007669"/>
    <property type="project" value="UniProtKB-UniRule"/>
</dbReference>
<dbReference type="GO" id="GO:0003697">
    <property type="term" value="F:single-stranded DNA binding"/>
    <property type="evidence" value="ECO:0007669"/>
    <property type="project" value="UniProtKB-UniRule"/>
</dbReference>
<dbReference type="GO" id="GO:0006310">
    <property type="term" value="P:DNA recombination"/>
    <property type="evidence" value="ECO:0007669"/>
    <property type="project" value="UniProtKB-UniRule"/>
</dbReference>
<dbReference type="GO" id="GO:0006281">
    <property type="term" value="P:DNA repair"/>
    <property type="evidence" value="ECO:0007669"/>
    <property type="project" value="UniProtKB-UniRule"/>
</dbReference>
<dbReference type="GO" id="GO:0009432">
    <property type="term" value="P:SOS response"/>
    <property type="evidence" value="ECO:0007669"/>
    <property type="project" value="UniProtKB-UniRule"/>
</dbReference>
<dbReference type="CDD" id="cd00983">
    <property type="entry name" value="RecA"/>
    <property type="match status" value="1"/>
</dbReference>
<dbReference type="FunFam" id="3.40.50.300:FF:000087">
    <property type="entry name" value="Recombinase RecA"/>
    <property type="match status" value="1"/>
</dbReference>
<dbReference type="Gene3D" id="3.40.50.300">
    <property type="entry name" value="P-loop containing nucleotide triphosphate hydrolases"/>
    <property type="match status" value="1"/>
</dbReference>
<dbReference type="HAMAP" id="MF_00268">
    <property type="entry name" value="RecA"/>
    <property type="match status" value="1"/>
</dbReference>
<dbReference type="InterPro" id="IPR003593">
    <property type="entry name" value="AAA+_ATPase"/>
</dbReference>
<dbReference type="InterPro" id="IPR013765">
    <property type="entry name" value="DNA_recomb/repair_RecA"/>
</dbReference>
<dbReference type="InterPro" id="IPR020584">
    <property type="entry name" value="DNA_recomb/repair_RecA_CS"/>
</dbReference>
<dbReference type="InterPro" id="IPR027417">
    <property type="entry name" value="P-loop_NTPase"/>
</dbReference>
<dbReference type="InterPro" id="IPR049261">
    <property type="entry name" value="RecA-like_C"/>
</dbReference>
<dbReference type="InterPro" id="IPR049428">
    <property type="entry name" value="RecA-like_N"/>
</dbReference>
<dbReference type="InterPro" id="IPR020588">
    <property type="entry name" value="RecA_ATP-bd"/>
</dbReference>
<dbReference type="InterPro" id="IPR023400">
    <property type="entry name" value="RecA_C_sf"/>
</dbReference>
<dbReference type="InterPro" id="IPR020587">
    <property type="entry name" value="RecA_monomer-monomer_interface"/>
</dbReference>
<dbReference type="NCBIfam" id="TIGR02012">
    <property type="entry name" value="tigrfam_recA"/>
    <property type="match status" value="1"/>
</dbReference>
<dbReference type="PANTHER" id="PTHR45900:SF1">
    <property type="entry name" value="MITOCHONDRIAL DNA REPAIR PROTEIN RECA HOMOLOG-RELATED"/>
    <property type="match status" value="1"/>
</dbReference>
<dbReference type="PANTHER" id="PTHR45900">
    <property type="entry name" value="RECA"/>
    <property type="match status" value="1"/>
</dbReference>
<dbReference type="Pfam" id="PF00154">
    <property type="entry name" value="RecA"/>
    <property type="match status" value="1"/>
</dbReference>
<dbReference type="Pfam" id="PF21096">
    <property type="entry name" value="RecA_C"/>
    <property type="match status" value="1"/>
</dbReference>
<dbReference type="PRINTS" id="PR00142">
    <property type="entry name" value="RECA"/>
</dbReference>
<dbReference type="SMART" id="SM00382">
    <property type="entry name" value="AAA"/>
    <property type="match status" value="1"/>
</dbReference>
<dbReference type="SUPFAM" id="SSF52540">
    <property type="entry name" value="P-loop containing nucleoside triphosphate hydrolases"/>
    <property type="match status" value="1"/>
</dbReference>
<dbReference type="SUPFAM" id="SSF54752">
    <property type="entry name" value="RecA protein, C-terminal domain"/>
    <property type="match status" value="1"/>
</dbReference>
<dbReference type="PROSITE" id="PS00321">
    <property type="entry name" value="RECA_1"/>
    <property type="match status" value="1"/>
</dbReference>
<dbReference type="PROSITE" id="PS50162">
    <property type="entry name" value="RECA_2"/>
    <property type="match status" value="1"/>
</dbReference>
<dbReference type="PROSITE" id="PS50163">
    <property type="entry name" value="RECA_3"/>
    <property type="match status" value="1"/>
</dbReference>
<protein>
    <recommendedName>
        <fullName evidence="1">Protein RecA</fullName>
    </recommendedName>
    <alternativeName>
        <fullName evidence="1">Recombinase A</fullName>
    </alternativeName>
</protein>
<reference key="1">
    <citation type="journal article" date="2000" name="DNA Res.">
        <title>Complete genome structure of the nitrogen-fixing symbiotic bacterium Mesorhizobium loti.</title>
        <authorList>
            <person name="Kaneko T."/>
            <person name="Nakamura Y."/>
            <person name="Sato S."/>
            <person name="Asamizu E."/>
            <person name="Kato T."/>
            <person name="Sasamoto S."/>
            <person name="Watanabe A."/>
            <person name="Idesawa K."/>
            <person name="Ishikawa A."/>
            <person name="Kawashima K."/>
            <person name="Kimura T."/>
            <person name="Kishida Y."/>
            <person name="Kiyokawa C."/>
            <person name="Kohara M."/>
            <person name="Matsumoto M."/>
            <person name="Matsuno A."/>
            <person name="Mochizuki Y."/>
            <person name="Nakayama S."/>
            <person name="Nakazaki N."/>
            <person name="Shimpo S."/>
            <person name="Sugimoto M."/>
            <person name="Takeuchi C."/>
            <person name="Yamada M."/>
            <person name="Tabata S."/>
        </authorList>
    </citation>
    <scope>NUCLEOTIDE SEQUENCE [LARGE SCALE GENOMIC DNA]</scope>
    <source>
        <strain>LMG 29417 / CECT 9101 / MAFF 303099</strain>
    </source>
</reference>